<evidence type="ECO:0000255" key="1"/>
<evidence type="ECO:0000305" key="2"/>
<gene>
    <name type="primary">pepDA</name>
    <name type="synonym">pepD</name>
    <name type="ordered locus">SPy_0713</name>
    <name type="ordered locus">M5005_Spy0542</name>
</gene>
<feature type="chain" id="PRO_0000220386" description="Probable dipeptidase A">
    <location>
        <begin position="1"/>
        <end position="472"/>
    </location>
</feature>
<feature type="active site" evidence="1">
    <location>
        <position position="10"/>
    </location>
</feature>
<feature type="sequence conflict" description="In Ref. 2." evidence="2" ref="2">
    <original>MDKKIQRFS</original>
    <variation>MA</variation>
    <location>
        <begin position="1"/>
        <end position="9"/>
    </location>
</feature>
<feature type="sequence conflict" description="In Ref. 2; AAZ51160." evidence="2" ref="2">
    <original>V</original>
    <variation>A</variation>
    <location>
        <position position="424"/>
    </location>
</feature>
<name>PEPDA_STRP1</name>
<keyword id="KW-0224">Dipeptidase</keyword>
<keyword id="KW-0378">Hydrolase</keyword>
<keyword id="KW-0645">Protease</keyword>
<keyword id="KW-1185">Reference proteome</keyword>
<organism>
    <name type="scientific">Streptococcus pyogenes serotype M1</name>
    <dbReference type="NCBI Taxonomy" id="301447"/>
    <lineage>
        <taxon>Bacteria</taxon>
        <taxon>Bacillati</taxon>
        <taxon>Bacillota</taxon>
        <taxon>Bacilli</taxon>
        <taxon>Lactobacillales</taxon>
        <taxon>Streptococcaceae</taxon>
        <taxon>Streptococcus</taxon>
    </lineage>
</organism>
<protein>
    <recommendedName>
        <fullName>Probable dipeptidase A</fullName>
        <ecNumber>3.4.13.19</ecNumber>
    </recommendedName>
</protein>
<reference key="1">
    <citation type="journal article" date="2001" name="Proc. Natl. Acad. Sci. U.S.A.">
        <title>Complete genome sequence of an M1 strain of Streptococcus pyogenes.</title>
        <authorList>
            <person name="Ferretti J.J."/>
            <person name="McShan W.M."/>
            <person name="Ajdic D.J."/>
            <person name="Savic D.J."/>
            <person name="Savic G."/>
            <person name="Lyon K."/>
            <person name="Primeaux C."/>
            <person name="Sezate S."/>
            <person name="Suvorov A.N."/>
            <person name="Kenton S."/>
            <person name="Lai H.S."/>
            <person name="Lin S.P."/>
            <person name="Qian Y."/>
            <person name="Jia H.G."/>
            <person name="Najar F.Z."/>
            <person name="Ren Q."/>
            <person name="Zhu H."/>
            <person name="Song L."/>
            <person name="White J."/>
            <person name="Yuan X."/>
            <person name="Clifton S.W."/>
            <person name="Roe B.A."/>
            <person name="McLaughlin R.E."/>
        </authorList>
    </citation>
    <scope>NUCLEOTIDE SEQUENCE [LARGE SCALE GENOMIC DNA]</scope>
    <source>
        <strain>ATCC 700294 / SF370 / Serotype M1</strain>
    </source>
</reference>
<reference key="2">
    <citation type="journal article" date="2005" name="J. Infect. Dis.">
        <title>Evolutionary origin and emergence of a highly successful clone of serotype M1 group A Streptococcus involved multiple horizontal gene transfer events.</title>
        <authorList>
            <person name="Sumby P."/>
            <person name="Porcella S.F."/>
            <person name="Madrigal A.G."/>
            <person name="Barbian K.D."/>
            <person name="Virtaneva K."/>
            <person name="Ricklefs S.M."/>
            <person name="Sturdevant D.E."/>
            <person name="Graham M.R."/>
            <person name="Vuopio-Varkila J."/>
            <person name="Hoe N.P."/>
            <person name="Musser J.M."/>
        </authorList>
    </citation>
    <scope>NUCLEOTIDE SEQUENCE [LARGE SCALE GENOMIC DNA]</scope>
    <source>
        <strain>ATCC BAA-947 / MGAS5005 / Serotype M1</strain>
    </source>
</reference>
<comment type="catalytic activity">
    <reaction>
        <text>an L-aminoacyl-L-amino acid + H2O = 2 an L-alpha-amino acid</text>
        <dbReference type="Rhea" id="RHEA:48940"/>
        <dbReference type="ChEBI" id="CHEBI:15377"/>
        <dbReference type="ChEBI" id="CHEBI:59869"/>
        <dbReference type="ChEBI" id="CHEBI:77460"/>
        <dbReference type="EC" id="3.4.13.19"/>
    </reaction>
</comment>
<comment type="similarity">
    <text evidence="2">Belongs to the peptidase C69 family.</text>
</comment>
<sequence>MDKKIQRFSCTTILVGKKASYDGSTMVARTEDSQNGDFTPKKMIVVKPEDQPRHYRSVQSSFEMDLPDNPMTYTSVPDALGKDGIWAEAGVNEANVAMSATETITTNSRVLGADPLVASGIGEEDMVTLVLPYIRSAREGVLRLGAILEDYGTYESNGVAFSDEHDIWWLETIGGHHWIARRVPDDAYVTNPNQFGIDHFEFNNPEDYLCSADLKDFIDTYHLDLTYSHEHFNPRYAFGSQRDKDRQYNTPRAWIMQKFLNPEIVQDPRSFALAWCQKPYRKITVEDVKYVLSSHYQDTGYDPYGSEGTPVSKKVFRPIGINRTSQTAILHIRPNKPQEIAAIQWMAYGSMPFNTMVPFFTQVKTIPDYFANTYENVFTDNFYWTNRLIAALADPHYNHHETDLDNYLEETMAKGHAMLHAVEVQLLAGETVDLEEENQKMSDYVQGETQTLLNKILFDASNLMTNRFSLSD</sequence>
<proteinExistence type="inferred from homology"/>
<dbReference type="EC" id="3.4.13.19"/>
<dbReference type="EMBL" id="AE004092">
    <property type="protein sequence ID" value="AAK33666.1"/>
    <property type="molecule type" value="Genomic_DNA"/>
</dbReference>
<dbReference type="EMBL" id="CP000017">
    <property type="protein sequence ID" value="AAZ51160.1"/>
    <property type="molecule type" value="Genomic_DNA"/>
</dbReference>
<dbReference type="RefSeq" id="NP_268945.1">
    <property type="nucleotide sequence ID" value="NC_002737.2"/>
</dbReference>
<dbReference type="SMR" id="Q9A0M0"/>
<dbReference type="MEROPS" id="C69.001"/>
<dbReference type="PaxDb" id="1314-HKU360_00552"/>
<dbReference type="KEGG" id="spy:SPy_0713"/>
<dbReference type="KEGG" id="spz:M5005_Spy0542"/>
<dbReference type="PATRIC" id="fig|160490.10.peg.607"/>
<dbReference type="HOGENOM" id="CLU_014823_4_2_9"/>
<dbReference type="OMA" id="GNMNEHQ"/>
<dbReference type="Proteomes" id="UP000000750">
    <property type="component" value="Chromosome"/>
</dbReference>
<dbReference type="GO" id="GO:0070004">
    <property type="term" value="F:cysteine-type exopeptidase activity"/>
    <property type="evidence" value="ECO:0007669"/>
    <property type="project" value="InterPro"/>
</dbReference>
<dbReference type="GO" id="GO:0016805">
    <property type="term" value="F:dipeptidase activity"/>
    <property type="evidence" value="ECO:0007669"/>
    <property type="project" value="UniProtKB-KW"/>
</dbReference>
<dbReference type="GO" id="GO:0006508">
    <property type="term" value="P:proteolysis"/>
    <property type="evidence" value="ECO:0007669"/>
    <property type="project" value="UniProtKB-KW"/>
</dbReference>
<dbReference type="Gene3D" id="3.60.60.10">
    <property type="entry name" value="Penicillin V Acylase, Chain A"/>
    <property type="match status" value="1"/>
</dbReference>
<dbReference type="InterPro" id="IPR047804">
    <property type="entry name" value="C69_dipept_A-like"/>
</dbReference>
<dbReference type="InterPro" id="IPR005322">
    <property type="entry name" value="Peptidase_C69"/>
</dbReference>
<dbReference type="NCBIfam" id="NF033678">
    <property type="entry name" value="C69_fam_dipept"/>
    <property type="match status" value="1"/>
</dbReference>
<dbReference type="PANTHER" id="PTHR12994:SF17">
    <property type="entry name" value="LD30995P"/>
    <property type="match status" value="1"/>
</dbReference>
<dbReference type="PANTHER" id="PTHR12994">
    <property type="entry name" value="SECERNIN"/>
    <property type="match status" value="1"/>
</dbReference>
<dbReference type="Pfam" id="PF03577">
    <property type="entry name" value="Peptidase_C69"/>
    <property type="match status" value="1"/>
</dbReference>
<accession>Q9A0M0</accession>
<accession>Q48ZQ8</accession>